<evidence type="ECO:0000255" key="1">
    <source>
        <dbReference type="HAMAP-Rule" id="MF_00440"/>
    </source>
</evidence>
<proteinExistence type="inferred from homology"/>
<sequence>MHCPFCQHNDTRVIDSRVSEDGTTIRRRRECEACGERFSTLETIELKLPTVVKSDGGREAFDARKLRTSFDRALQKRPVSEEQIEAAVRAVVHQLRMSGEREVGSLRVGEYVMVELRKLDHVGYVRFASVYRSFQDVADFREEIEKLERELPVGSEQLPLLEAALERAGKPGKR</sequence>
<accession>B0RVE0</accession>
<feature type="chain" id="PRO_1000124564" description="Transcriptional repressor NrdR">
    <location>
        <begin position="1"/>
        <end position="174"/>
    </location>
</feature>
<feature type="domain" description="ATP-cone" evidence="1">
    <location>
        <begin position="49"/>
        <end position="139"/>
    </location>
</feature>
<feature type="zinc finger region" evidence="1">
    <location>
        <begin position="3"/>
        <end position="34"/>
    </location>
</feature>
<dbReference type="EMBL" id="AM920689">
    <property type="protein sequence ID" value="CAP53031.1"/>
    <property type="molecule type" value="Genomic_DNA"/>
</dbReference>
<dbReference type="SMR" id="B0RVE0"/>
<dbReference type="KEGG" id="xca:xcc-b100_3666"/>
<dbReference type="HOGENOM" id="CLU_108412_0_0_6"/>
<dbReference type="Proteomes" id="UP000001188">
    <property type="component" value="Chromosome"/>
</dbReference>
<dbReference type="GO" id="GO:0005524">
    <property type="term" value="F:ATP binding"/>
    <property type="evidence" value="ECO:0007669"/>
    <property type="project" value="UniProtKB-KW"/>
</dbReference>
<dbReference type="GO" id="GO:0003677">
    <property type="term" value="F:DNA binding"/>
    <property type="evidence" value="ECO:0007669"/>
    <property type="project" value="UniProtKB-KW"/>
</dbReference>
<dbReference type="GO" id="GO:0008270">
    <property type="term" value="F:zinc ion binding"/>
    <property type="evidence" value="ECO:0007669"/>
    <property type="project" value="UniProtKB-UniRule"/>
</dbReference>
<dbReference type="GO" id="GO:0045892">
    <property type="term" value="P:negative regulation of DNA-templated transcription"/>
    <property type="evidence" value="ECO:0007669"/>
    <property type="project" value="UniProtKB-UniRule"/>
</dbReference>
<dbReference type="HAMAP" id="MF_00440">
    <property type="entry name" value="NrdR"/>
    <property type="match status" value="1"/>
</dbReference>
<dbReference type="InterPro" id="IPR005144">
    <property type="entry name" value="ATP-cone_dom"/>
</dbReference>
<dbReference type="InterPro" id="IPR055173">
    <property type="entry name" value="NrdR-like_N"/>
</dbReference>
<dbReference type="InterPro" id="IPR003796">
    <property type="entry name" value="RNR_NrdR-like"/>
</dbReference>
<dbReference type="NCBIfam" id="TIGR00244">
    <property type="entry name" value="transcriptional regulator NrdR"/>
    <property type="match status" value="1"/>
</dbReference>
<dbReference type="PANTHER" id="PTHR30455">
    <property type="entry name" value="TRANSCRIPTIONAL REPRESSOR NRDR"/>
    <property type="match status" value="1"/>
</dbReference>
<dbReference type="PANTHER" id="PTHR30455:SF2">
    <property type="entry name" value="TRANSCRIPTIONAL REPRESSOR NRDR"/>
    <property type="match status" value="1"/>
</dbReference>
<dbReference type="Pfam" id="PF03477">
    <property type="entry name" value="ATP-cone"/>
    <property type="match status" value="1"/>
</dbReference>
<dbReference type="Pfam" id="PF22811">
    <property type="entry name" value="Zn_ribbon_NrdR"/>
    <property type="match status" value="1"/>
</dbReference>
<dbReference type="PROSITE" id="PS51161">
    <property type="entry name" value="ATP_CONE"/>
    <property type="match status" value="1"/>
</dbReference>
<organism>
    <name type="scientific">Xanthomonas campestris pv. campestris (strain B100)</name>
    <dbReference type="NCBI Taxonomy" id="509169"/>
    <lineage>
        <taxon>Bacteria</taxon>
        <taxon>Pseudomonadati</taxon>
        <taxon>Pseudomonadota</taxon>
        <taxon>Gammaproteobacteria</taxon>
        <taxon>Lysobacterales</taxon>
        <taxon>Lysobacteraceae</taxon>
        <taxon>Xanthomonas</taxon>
    </lineage>
</organism>
<comment type="function">
    <text evidence="1">Negatively regulates transcription of bacterial ribonucleotide reductase nrd genes and operons by binding to NrdR-boxes.</text>
</comment>
<comment type="cofactor">
    <cofactor evidence="1">
        <name>Zn(2+)</name>
        <dbReference type="ChEBI" id="CHEBI:29105"/>
    </cofactor>
    <text evidence="1">Binds 1 zinc ion.</text>
</comment>
<comment type="similarity">
    <text evidence="1">Belongs to the NrdR family.</text>
</comment>
<protein>
    <recommendedName>
        <fullName evidence="1">Transcriptional repressor NrdR</fullName>
    </recommendedName>
</protein>
<keyword id="KW-0067">ATP-binding</keyword>
<keyword id="KW-0238">DNA-binding</keyword>
<keyword id="KW-0479">Metal-binding</keyword>
<keyword id="KW-0547">Nucleotide-binding</keyword>
<keyword id="KW-0678">Repressor</keyword>
<keyword id="KW-0804">Transcription</keyword>
<keyword id="KW-0805">Transcription regulation</keyword>
<keyword id="KW-0862">Zinc</keyword>
<keyword id="KW-0863">Zinc-finger</keyword>
<reference key="1">
    <citation type="journal article" date="2008" name="J. Biotechnol.">
        <title>The genome of Xanthomonas campestris pv. campestris B100 and its use for the reconstruction of metabolic pathways involved in xanthan biosynthesis.</title>
        <authorList>
            <person name="Vorhoelter F.-J."/>
            <person name="Schneiker S."/>
            <person name="Goesmann A."/>
            <person name="Krause L."/>
            <person name="Bekel T."/>
            <person name="Kaiser O."/>
            <person name="Linke B."/>
            <person name="Patschkowski T."/>
            <person name="Rueckert C."/>
            <person name="Schmid J."/>
            <person name="Sidhu V.K."/>
            <person name="Sieber V."/>
            <person name="Tauch A."/>
            <person name="Watt S.A."/>
            <person name="Weisshaar B."/>
            <person name="Becker A."/>
            <person name="Niehaus K."/>
            <person name="Puehler A."/>
        </authorList>
    </citation>
    <scope>NUCLEOTIDE SEQUENCE [LARGE SCALE GENOMIC DNA]</scope>
    <source>
        <strain>B100</strain>
    </source>
</reference>
<gene>
    <name evidence="1" type="primary">nrdR</name>
    <name type="ordered locus">xcc-b100_3666</name>
</gene>
<name>NRDR_XANCB</name>